<name>TRP6H_STRT5</name>
<keyword id="KW-0002">3D-structure</keyword>
<keyword id="KW-0274">FAD</keyword>
<keyword id="KW-0285">Flavoprotein</keyword>
<keyword id="KW-0547">Nucleotide-binding</keyword>
<keyword id="KW-0560">Oxidoreductase</keyword>
<sequence>MNTRNPDKVVIVGGGTAGWMTASYLKKAFGERVSVTLVESGTIGTVGVGEATFSDIRHFFEFLDLREEEWMPACNATYKLAVRFQDWQRPGHHFYHPFEQMRSVDGFPLTDWWLQNGPTDRFDRDCFVMASLCDAGRSPRYLNGSLLQQEFDERAEEPAGLTMSEHQGKTQFPYAYHFEAALLAEFLSGYSKDRGVKHVVDEVLEVKLDDRGWISHVVTKEHGDIGGDLFVDCTGFRGVLLNQALGVPFVSYQDTLPNDSAVALQVPLDMEARGIPPYTRATAKEAGWIWTIPLIGRIGTGYVYAKDYCSPEEAERTLREFVGPEAADVEANHIRMRIGRSEQSWKNNCVAIGLSSGFVEPLESTGIFFIHHAIEQLVKHFPAGDWHPQLRAGYNSAVANVMDGVREFLVLHYLGAARNDTRYWKDTKTRAVPDALAERIERWKVQLPDSENVFPYYHGLPPYSYMAILLGTGAIGLRPSPALALADPAAAEKEFTAIRDRARFLVDTLPSQYEYFAAMGQRV</sequence>
<dbReference type="EC" id="1.14.19.59" evidence="3 4"/>
<dbReference type="EMBL" id="HQ844046">
    <property type="protein sequence ID" value="ADW94630.1"/>
    <property type="molecule type" value="Genomic_DNA"/>
</dbReference>
<dbReference type="PDB" id="5HY5">
    <property type="method" value="X-ray"/>
    <property type="resolution" value="2.68 A"/>
    <property type="chains" value="A/B=1-523"/>
</dbReference>
<dbReference type="PDBsum" id="5HY5"/>
<dbReference type="SMR" id="E9P162"/>
<dbReference type="KEGG" id="ag:ADW94630"/>
<dbReference type="BRENDA" id="1.14.19.58">
    <property type="organism ID" value="12882"/>
</dbReference>
<dbReference type="BRENDA" id="1.14.19.59">
    <property type="organism ID" value="12882"/>
</dbReference>
<dbReference type="GO" id="GO:0004497">
    <property type="term" value="F:monooxygenase activity"/>
    <property type="evidence" value="ECO:0007669"/>
    <property type="project" value="InterPro"/>
</dbReference>
<dbReference type="GO" id="GO:0000166">
    <property type="term" value="F:nucleotide binding"/>
    <property type="evidence" value="ECO:0007669"/>
    <property type="project" value="UniProtKB-KW"/>
</dbReference>
<dbReference type="Gene3D" id="3.50.50.60">
    <property type="entry name" value="FAD/NAD(P)-binding domain"/>
    <property type="match status" value="1"/>
</dbReference>
<dbReference type="InterPro" id="IPR036188">
    <property type="entry name" value="FAD/NAD-bd_sf"/>
</dbReference>
<dbReference type="InterPro" id="IPR050816">
    <property type="entry name" value="Flavin-dep_Halogenase_NPB"/>
</dbReference>
<dbReference type="InterPro" id="IPR006905">
    <property type="entry name" value="Flavin_halogenase"/>
</dbReference>
<dbReference type="InterPro" id="IPR033856">
    <property type="entry name" value="Trp_halogen"/>
</dbReference>
<dbReference type="PANTHER" id="PTHR43747">
    <property type="entry name" value="FAD-BINDING PROTEIN"/>
    <property type="match status" value="1"/>
</dbReference>
<dbReference type="PANTHER" id="PTHR43747:SF4">
    <property type="entry name" value="FLAVIN-DEPENDENT TRYPTOPHAN HALOGENASE"/>
    <property type="match status" value="1"/>
</dbReference>
<dbReference type="Pfam" id="PF04820">
    <property type="entry name" value="Trp_halogenase"/>
    <property type="match status" value="1"/>
</dbReference>
<dbReference type="PIRSF" id="PIRSF011396">
    <property type="entry name" value="Trp_halogenase"/>
    <property type="match status" value="1"/>
</dbReference>
<dbReference type="SUPFAM" id="SSF51905">
    <property type="entry name" value="FAD/NAD(P)-binding domain"/>
    <property type="match status" value="1"/>
</dbReference>
<protein>
    <recommendedName>
        <fullName evidence="5">Tryptophan 6-halogenase SttH</fullName>
        <shortName evidence="5">Trp 6-halogenase</shortName>
        <ecNumber evidence="3 4">1.14.19.59</ecNumber>
    </recommendedName>
</protein>
<comment type="function">
    <text evidence="3 4">Catalyzes the chlorination of tryptophan (Trp) at C6 position to yield 6-chloro-tryptophan (PubMed:21424165, PubMed:26840773). Accepts both L and D-Trp as the substrates (PubMed:21424165). The enzyme also uses bromide to yield 6-bromo-Trp (PubMed:21424165). In vitro, can also catalyze the halogenation of 3-indolepropionic acid, N-methyltryptophan and non-indolic aromatic substrates such as kynurenine, anthranilamide and N-phenylanthranilic acid (PubMed:26840773).</text>
</comment>
<comment type="catalytic activity">
    <reaction evidence="3 4">
        <text>L-tryptophan + FADH2 + chloride + O2 = 6-chloro-L-tryptophan + FAD + 2 H2O</text>
        <dbReference type="Rhea" id="RHEA:55900"/>
        <dbReference type="ChEBI" id="CHEBI:15377"/>
        <dbReference type="ChEBI" id="CHEBI:15379"/>
        <dbReference type="ChEBI" id="CHEBI:17996"/>
        <dbReference type="ChEBI" id="CHEBI:57692"/>
        <dbReference type="ChEBI" id="CHEBI:57912"/>
        <dbReference type="ChEBI" id="CHEBI:58307"/>
        <dbReference type="ChEBI" id="CHEBI:139335"/>
        <dbReference type="EC" id="1.14.19.59"/>
    </reaction>
</comment>
<comment type="catalytic activity">
    <reaction evidence="3">
        <text>D-tryptophan + FADH2 + chloride + O2 = 6-chloro-D-tryptophan + FAD + 2 H2O</text>
        <dbReference type="Rhea" id="RHEA:56528"/>
        <dbReference type="ChEBI" id="CHEBI:15377"/>
        <dbReference type="ChEBI" id="CHEBI:15379"/>
        <dbReference type="ChEBI" id="CHEBI:17996"/>
        <dbReference type="ChEBI" id="CHEBI:57692"/>
        <dbReference type="ChEBI" id="CHEBI:57719"/>
        <dbReference type="ChEBI" id="CHEBI:58307"/>
        <dbReference type="ChEBI" id="CHEBI:140509"/>
        <dbReference type="EC" id="1.14.19.59"/>
    </reaction>
</comment>
<comment type="biophysicochemical properties">
    <kinetics>
        <KM evidence="3">21 uM for L-tryptophan</KM>
        <KM evidence="4">0.8 uM for tryptophan</KM>
        <KM evidence="4">241 uM for kynurenine</KM>
        <KM evidence="4">1075 uM for anthranilamide</KM>
        <text evidence="3 4">kcat is 1.53 min(-1) with L-tryptophan as substrate (PubMed:21424165). kcat is 0.65 min(-1) with tryptophan as substrate (PubMed:26840773). kcat is 0.51 min(-1) with kynurenine as substrate (PubMed:26840773). kcat is 1.21 min(-1) with anthranilamide as substrate (PubMed:26840773).</text>
    </kinetics>
    <phDependence>
        <text evidence="3">Optimum pH is 6.</text>
    </phDependence>
    <temperatureDependence>
        <text evidence="3">Optimum temperature is 40 degrees Celsius.</text>
    </temperatureDependence>
</comment>
<comment type="subunit">
    <text evidence="4">Homodimer.</text>
</comment>
<comment type="similarity">
    <text evidence="6">Belongs to the flavin-dependent halogenase family. Bacterial tryptophan halogenase subfamily.</text>
</comment>
<accession>E9P162</accession>
<reference key="1">
    <citation type="journal article" date="2011" name="Biotechnol. Lett.">
        <title>Characterization of a tryptophan 6-halogenase from Streptomyces toxytricini.</title>
        <authorList>
            <person name="Zeng J."/>
            <person name="Zhan J."/>
        </authorList>
    </citation>
    <scope>NUCLEOTIDE SEQUENCE [GENOMIC DNA]</scope>
    <scope>FUNCTION</scope>
    <scope>CATALYTIC ACTIVITY</scope>
    <scope>BIOPHYSICOCHEMICAL PROPERTIES</scope>
    <source>
        <strain>NRRL 15443</strain>
    </source>
</reference>
<reference evidence="7" key="2">
    <citation type="journal article" date="2016" name="ChemBioChem">
        <title>A structure-guided switch in the regioselectivity of a tryptophan halogenase.</title>
        <authorList>
            <person name="Shepherd S.A."/>
            <person name="Menon B.R."/>
            <person name="Fisk H."/>
            <person name="Struck A.W."/>
            <person name="Levy C."/>
            <person name="Leys D."/>
            <person name="Micklefield J."/>
        </authorList>
    </citation>
    <scope>X-RAY CRYSTALLOGRAPHY (2.68 ANGSTROMS) IN COMPLEX WITH CHLORIDE AND FAD</scope>
    <scope>FUNCTION</scope>
    <scope>CATALYTIC ACTIVITY</scope>
    <scope>BIOPHYSICOCHEMICAL PROPERTIES</scope>
    <scope>SUBUNIT</scope>
    <scope>MUTAGENESIS OF LEU-460; PRO-461 AND PRO-462</scope>
</reference>
<evidence type="ECO:0000250" key="1">
    <source>
        <dbReference type="UniProtKB" id="A1E280"/>
    </source>
</evidence>
<evidence type="ECO:0000250" key="2">
    <source>
        <dbReference type="UniProtKB" id="P95480"/>
    </source>
</evidence>
<evidence type="ECO:0000269" key="3">
    <source>
    </source>
</evidence>
<evidence type="ECO:0000269" key="4">
    <source>
    </source>
</evidence>
<evidence type="ECO:0000303" key="5">
    <source>
    </source>
</evidence>
<evidence type="ECO:0000305" key="6"/>
<evidence type="ECO:0007744" key="7">
    <source>
        <dbReference type="PDB" id="5HY5"/>
    </source>
</evidence>
<evidence type="ECO:0007829" key="8">
    <source>
        <dbReference type="PDB" id="5HY5"/>
    </source>
</evidence>
<gene>
    <name evidence="5" type="primary">sttH</name>
</gene>
<organism>
    <name type="scientific">Streptomyces toxytricini</name>
    <name type="common">Actinomyces toxytricini</name>
    <dbReference type="NCBI Taxonomy" id="67369"/>
    <lineage>
        <taxon>Bacteria</taxon>
        <taxon>Bacillati</taxon>
        <taxon>Actinomycetota</taxon>
        <taxon>Actinomycetes</taxon>
        <taxon>Kitasatosporales</taxon>
        <taxon>Streptomycetaceae</taxon>
        <taxon>Streptomyces</taxon>
    </lineage>
</organism>
<proteinExistence type="evidence at protein level"/>
<feature type="chain" id="PRO_0000459014" description="Tryptophan 6-halogenase SttH">
    <location>
        <begin position="1"/>
        <end position="523"/>
    </location>
</feature>
<feature type="active site" evidence="2">
    <location>
        <position position="79"/>
    </location>
</feature>
<feature type="binding site" evidence="7">
    <location>
        <position position="14"/>
    </location>
    <ligand>
        <name>FAD</name>
        <dbReference type="ChEBI" id="CHEBI:57692"/>
    </ligand>
</feature>
<feature type="binding site" evidence="7">
    <location>
        <position position="40"/>
    </location>
    <ligand>
        <name>FAD</name>
        <dbReference type="ChEBI" id="CHEBI:57692"/>
    </ligand>
</feature>
<feature type="binding site" evidence="7">
    <location>
        <position position="43"/>
    </location>
    <ligand>
        <name>FAD</name>
        <dbReference type="ChEBI" id="CHEBI:57692"/>
    </ligand>
</feature>
<feature type="binding site" evidence="7">
    <location>
        <position position="46"/>
    </location>
    <ligand>
        <name>FAD</name>
        <dbReference type="ChEBI" id="CHEBI:57692"/>
    </ligand>
</feature>
<feature type="binding site" evidence="7">
    <location>
        <position position="48"/>
    </location>
    <ligand>
        <name>FAD</name>
        <dbReference type="ChEBI" id="CHEBI:57692"/>
    </ligand>
</feature>
<feature type="binding site" evidence="7">
    <location>
        <position position="51"/>
    </location>
    <ligand>
        <name>FAD</name>
        <dbReference type="ChEBI" id="CHEBI:57692"/>
    </ligand>
</feature>
<feature type="binding site" evidence="1">
    <location>
        <position position="97"/>
    </location>
    <ligand>
        <name>L-tryptophan</name>
        <dbReference type="ChEBI" id="CHEBI:57912"/>
    </ligand>
</feature>
<feature type="binding site" evidence="7">
    <location>
        <position position="203"/>
    </location>
    <ligand>
        <name>FAD</name>
        <dbReference type="ChEBI" id="CHEBI:57692"/>
    </ligand>
</feature>
<feature type="binding site" evidence="7">
    <location>
        <position position="354"/>
    </location>
    <ligand>
        <name>FAD</name>
        <dbReference type="ChEBI" id="CHEBI:57692"/>
    </ligand>
</feature>
<feature type="binding site" evidence="4 7">
    <location>
        <position position="365"/>
    </location>
    <ligand>
        <name>chloride</name>
        <dbReference type="ChEBI" id="CHEBI:17996"/>
    </ligand>
</feature>
<feature type="binding site" evidence="4 7">
    <location>
        <position position="366"/>
    </location>
    <ligand>
        <name>chloride</name>
        <dbReference type="ChEBI" id="CHEBI:17996"/>
    </ligand>
</feature>
<feature type="binding site" evidence="7">
    <location>
        <position position="367"/>
    </location>
    <ligand>
        <name>FAD</name>
        <dbReference type="ChEBI" id="CHEBI:57692"/>
    </ligand>
</feature>
<feature type="binding site" evidence="1">
    <location>
        <position position="456"/>
    </location>
    <ligand>
        <name>L-tryptophan</name>
        <dbReference type="ChEBI" id="CHEBI:57912"/>
    </ligand>
</feature>
<feature type="binding site" evidence="1">
    <location>
        <position position="457"/>
    </location>
    <ligand>
        <name>L-tryptophan</name>
        <dbReference type="ChEBI" id="CHEBI:57912"/>
    </ligand>
</feature>
<feature type="site" description="Important for activity" evidence="2">
    <location>
        <position position="363"/>
    </location>
</feature>
<feature type="mutagenesis site" description="Decreases activity but still produces only 6-chlorotryptophan. Shows similar activity to the wild-type, but exhibits a switch in regioselectivity and produces 32% 5-chlorotryptophan and 68% 6-chlorotryptophan; when associated with E-461 and T-462." evidence="4">
    <original>L</original>
    <variation>F</variation>
    <location>
        <position position="460"/>
    </location>
</feature>
<feature type="mutagenesis site" description="Decreases activity but still produces only 6-chlorotryptophan. Shows similar activity to the wild-type, but exhibits a switch in regioselectivity and produces 32% 5-chlorotryptophan and 68% 6-chlorotryptophan; when associated with F-460 and T-462." evidence="4">
    <original>P</original>
    <variation>E</variation>
    <location>
        <position position="461"/>
    </location>
</feature>
<feature type="mutagenesis site" description="Decreases activity but still produces only 6-chlorotryptophan. Shows similar activity to the wild-type, but exhibits a switch in regioselectivity and produces 32% 5-chlorotryptophan and 68% 6-chlorotryptophan; when associated with F-460 and E-461." evidence="4">
    <original>P</original>
    <variation>T</variation>
    <location>
        <position position="462"/>
    </location>
</feature>
<feature type="strand" evidence="8">
    <location>
        <begin position="7"/>
        <end position="12"/>
    </location>
</feature>
<feature type="helix" evidence="8">
    <location>
        <begin position="16"/>
        <end position="20"/>
    </location>
</feature>
<feature type="helix" evidence="8">
    <location>
        <begin position="24"/>
        <end position="29"/>
    </location>
</feature>
<feature type="helix" evidence="8">
    <location>
        <begin position="30"/>
        <end position="32"/>
    </location>
</feature>
<feature type="strand" evidence="8">
    <location>
        <begin position="33"/>
        <end position="39"/>
    </location>
</feature>
<feature type="strand" evidence="8">
    <location>
        <begin position="41"/>
        <end position="43"/>
    </location>
</feature>
<feature type="helix" evidence="8">
    <location>
        <begin position="56"/>
        <end position="62"/>
    </location>
</feature>
<feature type="helix" evidence="8">
    <location>
        <begin position="67"/>
        <end position="70"/>
    </location>
</feature>
<feature type="helix" evidence="8">
    <location>
        <begin position="72"/>
        <end position="74"/>
    </location>
</feature>
<feature type="strand" evidence="8">
    <location>
        <begin position="77"/>
        <end position="79"/>
    </location>
</feature>
<feature type="strand" evidence="8">
    <location>
        <begin position="81"/>
        <end position="89"/>
    </location>
</feature>
<feature type="strand" evidence="8">
    <location>
        <begin position="93"/>
        <end position="98"/>
    </location>
</feature>
<feature type="helix" evidence="8">
    <location>
        <begin position="109"/>
        <end position="116"/>
    </location>
</feature>
<feature type="strand" evidence="8">
    <location>
        <begin position="118"/>
        <end position="120"/>
    </location>
</feature>
<feature type="helix" evidence="8">
    <location>
        <begin position="122"/>
        <end position="126"/>
    </location>
</feature>
<feature type="helix" evidence="8">
    <location>
        <begin position="129"/>
        <end position="135"/>
    </location>
</feature>
<feature type="strand" evidence="8">
    <location>
        <begin position="146"/>
        <end position="150"/>
    </location>
</feature>
<feature type="helix" evidence="8">
    <location>
        <begin position="163"/>
        <end position="169"/>
    </location>
</feature>
<feature type="strand" evidence="8">
    <location>
        <begin position="175"/>
        <end position="177"/>
    </location>
</feature>
<feature type="helix" evidence="8">
    <location>
        <begin position="180"/>
        <end position="192"/>
    </location>
</feature>
<feature type="turn" evidence="8">
    <location>
        <begin position="193"/>
        <end position="195"/>
    </location>
</feature>
<feature type="strand" evidence="8">
    <location>
        <begin position="197"/>
        <end position="200"/>
    </location>
</feature>
<feature type="strand" evidence="8">
    <location>
        <begin position="203"/>
        <end position="208"/>
    </location>
</feature>
<feature type="strand" evidence="8">
    <location>
        <begin position="214"/>
        <end position="222"/>
    </location>
</feature>
<feature type="strand" evidence="8">
    <location>
        <begin position="224"/>
        <end position="226"/>
    </location>
</feature>
<feature type="strand" evidence="8">
    <location>
        <begin position="228"/>
        <end position="232"/>
    </location>
</feature>
<feature type="helix" evidence="8">
    <location>
        <begin position="235"/>
        <end position="237"/>
    </location>
</feature>
<feature type="helix" evidence="8">
    <location>
        <begin position="239"/>
        <end position="244"/>
    </location>
</feature>
<feature type="strand" evidence="8">
    <location>
        <begin position="249"/>
        <end position="251"/>
    </location>
</feature>
<feature type="turn" evidence="8">
    <location>
        <begin position="253"/>
        <end position="255"/>
    </location>
</feature>
<feature type="strand" evidence="8">
    <location>
        <begin position="260"/>
        <end position="267"/>
    </location>
</feature>
<feature type="turn" evidence="8">
    <location>
        <begin position="270"/>
        <end position="272"/>
    </location>
</feature>
<feature type="strand" evidence="8">
    <location>
        <begin position="277"/>
        <end position="283"/>
    </location>
</feature>
<feature type="strand" evidence="8">
    <location>
        <begin position="285"/>
        <end position="293"/>
    </location>
</feature>
<feature type="strand" evidence="8">
    <location>
        <begin position="295"/>
        <end position="304"/>
    </location>
</feature>
<feature type="turn" evidence="8">
    <location>
        <begin position="306"/>
        <end position="308"/>
    </location>
</feature>
<feature type="helix" evidence="8">
    <location>
        <begin position="311"/>
        <end position="322"/>
    </location>
</feature>
<feature type="helix" evidence="8">
    <location>
        <begin position="324"/>
        <end position="326"/>
    </location>
</feature>
<feature type="strand" evidence="8">
    <location>
        <begin position="327"/>
        <end position="329"/>
    </location>
</feature>
<feature type="strand" evidence="8">
    <location>
        <begin position="332"/>
        <end position="335"/>
    </location>
</feature>
<feature type="strand" evidence="8">
    <location>
        <begin position="339"/>
        <end position="342"/>
    </location>
</feature>
<feature type="strand" evidence="8">
    <location>
        <begin position="344"/>
        <end position="346"/>
    </location>
</feature>
<feature type="strand" evidence="8">
    <location>
        <begin position="349"/>
        <end position="351"/>
    </location>
</feature>
<feature type="turn" evidence="8">
    <location>
        <begin position="354"/>
        <end position="356"/>
    </location>
</feature>
<feature type="helix" evidence="8">
    <location>
        <begin position="366"/>
        <end position="379"/>
    </location>
</feature>
<feature type="helix" evidence="8">
    <location>
        <begin position="388"/>
        <end position="414"/>
    </location>
</feature>
<feature type="helix" evidence="8">
    <location>
        <begin position="422"/>
        <end position="425"/>
    </location>
</feature>
<feature type="helix" evidence="8">
    <location>
        <begin position="426"/>
        <end position="428"/>
    </location>
</feature>
<feature type="helix" evidence="8">
    <location>
        <begin position="434"/>
        <end position="445"/>
    </location>
</feature>
<feature type="helix" evidence="8">
    <location>
        <begin position="462"/>
        <end position="472"/>
    </location>
</feature>
<feature type="strand" evidence="8">
    <location>
        <begin position="473"/>
        <end position="475"/>
    </location>
</feature>
<feature type="helix" evidence="8">
    <location>
        <begin position="481"/>
        <end position="484"/>
    </location>
</feature>
<feature type="helix" evidence="8">
    <location>
        <begin position="489"/>
        <end position="508"/>
    </location>
</feature>
<feature type="helix" evidence="8">
    <location>
        <begin position="512"/>
        <end position="517"/>
    </location>
</feature>